<keyword id="KW-0119">Carbohydrate metabolism</keyword>
<keyword id="KW-0963">Cytoplasm</keyword>
<keyword id="KW-0413">Isomerase</keyword>
<keyword id="KW-1185">Reference proteome</keyword>
<keyword id="KW-0684">Rhamnose metabolism</keyword>
<sequence>MIRKAFLMSVKPEAHAEYKRRHDEIWPELADTLKKHGAHNYNIFLNPETSQLFAYVEIESEERWNAVADTEICKEWWAYMKDIMPSNPDNSPVSLELTSVFYLA</sequence>
<name>RHAM_TOLAT</name>
<reference key="1">
    <citation type="submission" date="2009-05" db="EMBL/GenBank/DDBJ databases">
        <title>Complete sequence of Tolumonas auensis DSM 9187.</title>
        <authorList>
            <consortium name="US DOE Joint Genome Institute"/>
            <person name="Lucas S."/>
            <person name="Copeland A."/>
            <person name="Lapidus A."/>
            <person name="Glavina del Rio T."/>
            <person name="Tice H."/>
            <person name="Bruce D."/>
            <person name="Goodwin L."/>
            <person name="Pitluck S."/>
            <person name="Chertkov O."/>
            <person name="Brettin T."/>
            <person name="Detter J.C."/>
            <person name="Han C."/>
            <person name="Larimer F."/>
            <person name="Land M."/>
            <person name="Hauser L."/>
            <person name="Kyrpides N."/>
            <person name="Mikhailova N."/>
            <person name="Spring S."/>
            <person name="Beller H."/>
        </authorList>
    </citation>
    <scope>NUCLEOTIDE SEQUENCE [LARGE SCALE GENOMIC DNA]</scope>
    <source>
        <strain>DSM 9187 / NBRC 110442 / TA 4</strain>
    </source>
</reference>
<feature type="chain" id="PRO_1000215874" description="L-rhamnose mutarotase">
    <location>
        <begin position="1"/>
        <end position="104"/>
    </location>
</feature>
<feature type="active site" description="Proton donor" evidence="1">
    <location>
        <position position="22"/>
    </location>
</feature>
<feature type="binding site" evidence="1">
    <location>
        <position position="18"/>
    </location>
    <ligand>
        <name>substrate</name>
    </ligand>
</feature>
<feature type="binding site" evidence="1">
    <location>
        <position position="41"/>
    </location>
    <ligand>
        <name>substrate</name>
    </ligand>
</feature>
<feature type="binding site" evidence="1">
    <location>
        <begin position="76"/>
        <end position="77"/>
    </location>
    <ligand>
        <name>substrate</name>
    </ligand>
</feature>
<comment type="function">
    <text evidence="1">Involved in the anomeric conversion of L-rhamnose.</text>
</comment>
<comment type="catalytic activity">
    <reaction evidence="1">
        <text>alpha-L-rhamnose = beta-L-rhamnose</text>
        <dbReference type="Rhea" id="RHEA:25584"/>
        <dbReference type="ChEBI" id="CHEBI:27586"/>
        <dbReference type="ChEBI" id="CHEBI:27907"/>
        <dbReference type="EC" id="5.1.3.32"/>
    </reaction>
</comment>
<comment type="pathway">
    <text evidence="1">Carbohydrate metabolism; L-rhamnose metabolism.</text>
</comment>
<comment type="subunit">
    <text evidence="1">Homodimer.</text>
</comment>
<comment type="subcellular location">
    <subcellularLocation>
        <location evidence="1">Cytoplasm</location>
    </subcellularLocation>
</comment>
<comment type="similarity">
    <text evidence="1">Belongs to the rhamnose mutarotase family.</text>
</comment>
<dbReference type="EC" id="5.1.3.32" evidence="1"/>
<dbReference type="EMBL" id="CP001616">
    <property type="protein sequence ID" value="ACQ92667.1"/>
    <property type="molecule type" value="Genomic_DNA"/>
</dbReference>
<dbReference type="RefSeq" id="WP_012729266.1">
    <property type="nucleotide sequence ID" value="NC_012691.1"/>
</dbReference>
<dbReference type="SMR" id="C4LCV3"/>
<dbReference type="STRING" id="595494.Tola_1040"/>
<dbReference type="KEGG" id="tau:Tola_1040"/>
<dbReference type="eggNOG" id="COG3254">
    <property type="taxonomic scope" value="Bacteria"/>
</dbReference>
<dbReference type="HOGENOM" id="CLU_100689_2_0_6"/>
<dbReference type="OrthoDB" id="9799608at2"/>
<dbReference type="UniPathway" id="UPA00125"/>
<dbReference type="Proteomes" id="UP000009073">
    <property type="component" value="Chromosome"/>
</dbReference>
<dbReference type="GO" id="GO:0005737">
    <property type="term" value="C:cytoplasm"/>
    <property type="evidence" value="ECO:0007669"/>
    <property type="project" value="UniProtKB-SubCell"/>
</dbReference>
<dbReference type="GO" id="GO:0062192">
    <property type="term" value="F:L-rhamnose mutarotase activity"/>
    <property type="evidence" value="ECO:0007669"/>
    <property type="project" value="UniProtKB-EC"/>
</dbReference>
<dbReference type="GO" id="GO:0019301">
    <property type="term" value="P:rhamnose catabolic process"/>
    <property type="evidence" value="ECO:0007669"/>
    <property type="project" value="TreeGrafter"/>
</dbReference>
<dbReference type="Gene3D" id="3.30.70.100">
    <property type="match status" value="1"/>
</dbReference>
<dbReference type="HAMAP" id="MF_01663">
    <property type="entry name" value="L_rham_rotase"/>
    <property type="match status" value="1"/>
</dbReference>
<dbReference type="InterPro" id="IPR011008">
    <property type="entry name" value="Dimeric_a/b-barrel"/>
</dbReference>
<dbReference type="InterPro" id="IPR013448">
    <property type="entry name" value="L-rhamnose_mutarotase"/>
</dbReference>
<dbReference type="InterPro" id="IPR008000">
    <property type="entry name" value="Rham/fucose_mutarotase"/>
</dbReference>
<dbReference type="NCBIfam" id="TIGR02625">
    <property type="entry name" value="YiiL_rotase"/>
    <property type="match status" value="1"/>
</dbReference>
<dbReference type="PANTHER" id="PTHR34389">
    <property type="entry name" value="L-RHAMNOSE MUTAROTASE"/>
    <property type="match status" value="1"/>
</dbReference>
<dbReference type="PANTHER" id="PTHR34389:SF2">
    <property type="entry name" value="L-RHAMNOSE MUTAROTASE"/>
    <property type="match status" value="1"/>
</dbReference>
<dbReference type="Pfam" id="PF05336">
    <property type="entry name" value="rhaM"/>
    <property type="match status" value="1"/>
</dbReference>
<dbReference type="SUPFAM" id="SSF54909">
    <property type="entry name" value="Dimeric alpha+beta barrel"/>
    <property type="match status" value="1"/>
</dbReference>
<accession>C4LCV3</accession>
<evidence type="ECO:0000255" key="1">
    <source>
        <dbReference type="HAMAP-Rule" id="MF_01663"/>
    </source>
</evidence>
<protein>
    <recommendedName>
        <fullName evidence="1">L-rhamnose mutarotase</fullName>
        <ecNumber evidence="1">5.1.3.32</ecNumber>
    </recommendedName>
    <alternativeName>
        <fullName evidence="1">Rhamnose 1-epimerase</fullName>
    </alternativeName>
    <alternativeName>
        <fullName evidence="1">Type-3 mutarotase</fullName>
    </alternativeName>
</protein>
<gene>
    <name evidence="1" type="primary">rhaM</name>
    <name type="ordered locus">Tola_1040</name>
</gene>
<proteinExistence type="inferred from homology"/>
<organism>
    <name type="scientific">Tolumonas auensis (strain DSM 9187 / NBRC 110442 / TA 4)</name>
    <dbReference type="NCBI Taxonomy" id="595494"/>
    <lineage>
        <taxon>Bacteria</taxon>
        <taxon>Pseudomonadati</taxon>
        <taxon>Pseudomonadota</taxon>
        <taxon>Gammaproteobacteria</taxon>
        <taxon>Aeromonadales</taxon>
        <taxon>Aeromonadaceae</taxon>
        <taxon>Tolumonas</taxon>
    </lineage>
</organism>